<reference key="1">
    <citation type="submission" date="2004-11" db="EMBL/GenBank/DDBJ databases">
        <authorList>
            <consortium name="The German cDNA consortium"/>
        </authorList>
    </citation>
    <scope>NUCLEOTIDE SEQUENCE [LARGE SCALE MRNA]</scope>
    <source>
        <tissue>Brain cortex</tissue>
    </source>
</reference>
<keyword id="KW-0007">Acetylation</keyword>
<keyword id="KW-0156">Chromatin regulator</keyword>
<keyword id="KW-0227">DNA damage</keyword>
<keyword id="KW-0233">DNA recombination</keyword>
<keyword id="KW-0234">DNA repair</keyword>
<keyword id="KW-0341">Growth regulation</keyword>
<keyword id="KW-0539">Nucleus</keyword>
<keyword id="KW-1185">Reference proteome</keyword>
<keyword id="KW-0804">Transcription</keyword>
<keyword id="KW-0805">Transcription regulation</keyword>
<dbReference type="EMBL" id="CR925961">
    <property type="protein sequence ID" value="CAI29614.1"/>
    <property type="molecule type" value="mRNA"/>
</dbReference>
<dbReference type="RefSeq" id="NP_001127679.1">
    <property type="nucleotide sequence ID" value="NM_001134207.1"/>
</dbReference>
<dbReference type="BMRB" id="Q5NVP9"/>
<dbReference type="SMR" id="Q5NVP9"/>
<dbReference type="FunCoup" id="Q5NVP9">
    <property type="interactions" value="2586"/>
</dbReference>
<dbReference type="STRING" id="9601.ENSPPYP00000007607"/>
<dbReference type="GeneID" id="100174761"/>
<dbReference type="KEGG" id="pon:100174761"/>
<dbReference type="CTD" id="10933"/>
<dbReference type="eggNOG" id="KOG3001">
    <property type="taxonomic scope" value="Eukaryota"/>
</dbReference>
<dbReference type="InParanoid" id="Q5NVP9"/>
<dbReference type="OrthoDB" id="124855at2759"/>
<dbReference type="Proteomes" id="UP000001595">
    <property type="component" value="Unplaced"/>
</dbReference>
<dbReference type="GO" id="GO:0035267">
    <property type="term" value="C:NuA4 histone acetyltransferase complex"/>
    <property type="evidence" value="ECO:0000250"/>
    <property type="project" value="UniProtKB"/>
</dbReference>
<dbReference type="GO" id="GO:0070822">
    <property type="term" value="C:Sin3-type complex"/>
    <property type="evidence" value="ECO:0000250"/>
    <property type="project" value="UniProtKB"/>
</dbReference>
<dbReference type="GO" id="GO:0006325">
    <property type="term" value="P:chromatin organization"/>
    <property type="evidence" value="ECO:0007669"/>
    <property type="project" value="UniProtKB-KW"/>
</dbReference>
<dbReference type="GO" id="GO:0000724">
    <property type="term" value="P:double-strand break repair via homologous recombination"/>
    <property type="evidence" value="ECO:0000250"/>
    <property type="project" value="UniProtKB"/>
</dbReference>
<dbReference type="GO" id="GO:0006355">
    <property type="term" value="P:regulation of DNA-templated transcription"/>
    <property type="evidence" value="ECO:0007669"/>
    <property type="project" value="InterPro"/>
</dbReference>
<dbReference type="CDD" id="cd18983">
    <property type="entry name" value="CBD_MSL3_like"/>
    <property type="match status" value="1"/>
</dbReference>
<dbReference type="FunFam" id="1.10.274.30:FF:000001">
    <property type="entry name" value="Mortality factor 4-like protein 1"/>
    <property type="match status" value="1"/>
</dbReference>
<dbReference type="FunFam" id="2.30.30.140:FF:000024">
    <property type="entry name" value="Mortality factor 4-like protein 1"/>
    <property type="match status" value="1"/>
</dbReference>
<dbReference type="Gene3D" id="2.30.30.140">
    <property type="match status" value="1"/>
</dbReference>
<dbReference type="Gene3D" id="1.10.274.30">
    <property type="entry name" value="MRG domain"/>
    <property type="match status" value="1"/>
</dbReference>
<dbReference type="InterPro" id="IPR016197">
    <property type="entry name" value="Chromo-like_dom_sf"/>
</dbReference>
<dbReference type="InterPro" id="IPR000953">
    <property type="entry name" value="Chromo/chromo_shadow_dom"/>
</dbReference>
<dbReference type="InterPro" id="IPR008676">
    <property type="entry name" value="MRG"/>
</dbReference>
<dbReference type="InterPro" id="IPR038217">
    <property type="entry name" value="MRG_C_sf"/>
</dbReference>
<dbReference type="InterPro" id="IPR026541">
    <property type="entry name" value="MRG_dom"/>
</dbReference>
<dbReference type="InterPro" id="IPR053820">
    <property type="entry name" value="MSL3_chromo-like"/>
</dbReference>
<dbReference type="PANTHER" id="PTHR10880">
    <property type="entry name" value="MORTALITY FACTOR 4-LIKE PROTEIN"/>
    <property type="match status" value="1"/>
</dbReference>
<dbReference type="PANTHER" id="PTHR10880:SF29">
    <property type="entry name" value="MORTALITY FACTOR 4-LIKE PROTEIN 1"/>
    <property type="match status" value="1"/>
</dbReference>
<dbReference type="Pfam" id="PF05712">
    <property type="entry name" value="MRG"/>
    <property type="match status" value="1"/>
</dbReference>
<dbReference type="Pfam" id="PF22732">
    <property type="entry name" value="MSL3_chromo-like"/>
    <property type="match status" value="1"/>
</dbReference>
<dbReference type="PIRSF" id="PIRSF038133">
    <property type="entry name" value="HAT_Nua4_EAF3/MRG15"/>
    <property type="match status" value="1"/>
</dbReference>
<dbReference type="SMART" id="SM00298">
    <property type="entry name" value="CHROMO"/>
    <property type="match status" value="1"/>
</dbReference>
<dbReference type="SUPFAM" id="SSF54160">
    <property type="entry name" value="Chromo domain-like"/>
    <property type="match status" value="1"/>
</dbReference>
<dbReference type="PROSITE" id="PS51640">
    <property type="entry name" value="MRG"/>
    <property type="match status" value="1"/>
</dbReference>
<gene>
    <name type="primary">MORF4L1</name>
</gene>
<comment type="function">
    <text evidence="2">Component of the NuA4 histone acetyltransferase (HAT) complex which is involved in transcriptional activation of select genes principally by acetylation of nucleosomal histones H4 and H2A. This modification may both alter nucleosome - DNA interactions and promote interaction of the modified histones with other proteins which positively regulate transcription. This complex may be required for the activation of transcriptional programs associated with oncogene and proto-oncogene mediated growth induction, tumor suppressor mediated growth arrest and replicative senescence, apoptosis, and DNA repair. The NuA4 complex ATPase and helicase activities seem to be, at least in part, contributed by the association of RUVBL1 and RUVBL2 with EP400. NuA4 may also play a direct role in DNA repair when directly recruited to sites of DNA damage. As part of the SIN3B complex represses transcription and counteracts the histone acetyltransferase activity of EP300 through the recognition H3K27ac marks by PHF12 and the activity of the histone deacetylase HDAC2. SIN3B complex is recruited downstream of the constitutively active genes transcriptional start sites through interaction with histones and mitigates histone acetylation and RNA polymerase II progression within transcribed regions contributing to the regulation of transcription. Required for homologous recombination repair (HRR) and resistance to mitomycin C (MMC). Involved in the localization of PALB2, BRCA2 and RAD51, but not BRCA1, to DNA-damage foci.</text>
</comment>
<comment type="subunit">
    <text evidence="2">Component of the NuA4 histone acetyltransferase complex which contains the catalytic subunit KAT5/TIP60 and the subunits EP400, TRRAP/PAF400, BRD8/SMAP, EPC1, DMAP1/DNMAP1, RUVBL1/TIP49, RUVBL2, ING3, actin, ACTL6A/BAF53A, MORF4L1/MRG15, MORF4L2/MRGX, MRGBP, YEATS4/GAS41, VPS72/YL1 and MEAF6. The NuA4 complex interacts with MYC and the adenovirus E1A protein. MORF4L1 may also participate in the formation of NuA4 related complexes which lack the KAT5/TIP60 catalytic subunit, but which include the SWI/SNF related protein SRCAP. Component of the mSin3A histone deacetylase complex, which includes SIN3A, HDAC2, ARID4B, MORF4L1, RBBP4/RbAp48, and RBBP7/RbAp46. May also interact with PHF12 and one or more as yet undefined members of the TLE (transducin-like enhancer of split) family of transcriptional repressors. Component of the SIN3B complex, which includes SIN3B, HDAC2 or HDAC1, PHF12 and MORF4L1. Interacts with RB1 and KAT8. Interacts with the N-terminus of MRFAP1. Found in a complex composed of MORF4L1, MRFAP1 and RB1. Interacts with the entire BRCA complex, which contains BRCA1, PALB2, BRCA2 and RAD51. Interacts with PALB2. Forms a complex with MSL1 and NUPR1.</text>
</comment>
<comment type="subcellular location">
    <subcellularLocation>
        <location evidence="2">Nucleus</location>
    </subcellularLocation>
</comment>
<organism>
    <name type="scientific">Pongo abelii</name>
    <name type="common">Sumatran orangutan</name>
    <name type="synonym">Pongo pygmaeus abelii</name>
    <dbReference type="NCBI Taxonomy" id="9601"/>
    <lineage>
        <taxon>Eukaryota</taxon>
        <taxon>Metazoa</taxon>
        <taxon>Chordata</taxon>
        <taxon>Craniata</taxon>
        <taxon>Vertebrata</taxon>
        <taxon>Euteleostomi</taxon>
        <taxon>Mammalia</taxon>
        <taxon>Eutheria</taxon>
        <taxon>Euarchontoglires</taxon>
        <taxon>Primates</taxon>
        <taxon>Haplorrhini</taxon>
        <taxon>Catarrhini</taxon>
        <taxon>Hominidae</taxon>
        <taxon>Pongo</taxon>
    </lineage>
</organism>
<proteinExistence type="evidence at transcript level"/>
<evidence type="ECO:0000250" key="1"/>
<evidence type="ECO:0000250" key="2">
    <source>
        <dbReference type="UniProtKB" id="Q9UBU8"/>
    </source>
</evidence>
<evidence type="ECO:0000255" key="3"/>
<evidence type="ECO:0000255" key="4">
    <source>
        <dbReference type="PROSITE-ProRule" id="PRU00972"/>
    </source>
</evidence>
<evidence type="ECO:0000256" key="5">
    <source>
        <dbReference type="SAM" id="MobiDB-lite"/>
    </source>
</evidence>
<sequence>MAPKQDPKPKFQEGERVLCFHGPLLYEAKCVKVAIKDKQVKYFIHHSGWNKNWDEWVPESRVLKYVDTNLQKQRELQKANQEQYAEGKMRGAAPGKKTSGLQQKNVDVKTKKNKQKTPGNGDGGSTSETPQPPRKKRARVDPTVENEETFMNRVEVKVKIPEELKPWLVDDWDLITRQKQLFYLPAKKNVDSILEDYANYKKSRGNTDNKEYAVNEVVAGIKEYFNVMLGTQLLYKFERPQYAEILADHPDAPMSQVYGAPHLLRLFVRIGAMLAYTPLDEKSLALLLNYLHDFLKYLAKNSATLFSASDYEVAPPEYHRKAV</sequence>
<protein>
    <recommendedName>
        <fullName>Mortality factor 4-like protein 1</fullName>
    </recommendedName>
</protein>
<name>MO4L1_PONAB</name>
<feature type="chain" id="PRO_0000088766" description="Mortality factor 4-like protein 1">
    <location>
        <begin position="1"/>
        <end position="323"/>
    </location>
</feature>
<feature type="domain" description="Tudor-knot" evidence="3">
    <location>
        <begin position="12"/>
        <end position="62"/>
    </location>
</feature>
<feature type="domain" description="MRG" evidence="4">
    <location>
        <begin position="152"/>
        <end position="323"/>
    </location>
</feature>
<feature type="region of interest" description="Disordered" evidence="5">
    <location>
        <begin position="76"/>
        <end position="143"/>
    </location>
</feature>
<feature type="region of interest" description="Sufficient for interaction with SIN3A" evidence="1">
    <location>
        <begin position="94"/>
        <end position="227"/>
    </location>
</feature>
<feature type="region of interest" description="Interaction with RB1-1" evidence="1">
    <location>
        <begin position="125"/>
        <end position="191"/>
    </location>
</feature>
<feature type="region of interest" description="Sufficient for interaction with PHF12" evidence="1">
    <location>
        <begin position="149"/>
        <end position="303"/>
    </location>
</feature>
<feature type="region of interest" description="Interaction with RB1-2" evidence="1">
    <location>
        <begin position="284"/>
        <end position="305"/>
    </location>
</feature>
<feature type="short sequence motif" description="Nuclear localization signal" evidence="3">
    <location>
        <begin position="96"/>
        <end position="107"/>
    </location>
</feature>
<feature type="modified residue" description="N6-acetyllysine" evidence="2">
    <location>
        <position position="104"/>
    </location>
</feature>
<accession>Q5NVP9</accession>